<gene>
    <name evidence="1" type="primary">murD</name>
    <name type="ordered locus">Nmul_A2496</name>
</gene>
<evidence type="ECO:0000255" key="1">
    <source>
        <dbReference type="HAMAP-Rule" id="MF_00639"/>
    </source>
</evidence>
<comment type="function">
    <text evidence="1">Cell wall formation. Catalyzes the addition of glutamate to the nucleotide precursor UDP-N-acetylmuramoyl-L-alanine (UMA).</text>
</comment>
<comment type="catalytic activity">
    <reaction evidence="1">
        <text>UDP-N-acetyl-alpha-D-muramoyl-L-alanine + D-glutamate + ATP = UDP-N-acetyl-alpha-D-muramoyl-L-alanyl-D-glutamate + ADP + phosphate + H(+)</text>
        <dbReference type="Rhea" id="RHEA:16429"/>
        <dbReference type="ChEBI" id="CHEBI:15378"/>
        <dbReference type="ChEBI" id="CHEBI:29986"/>
        <dbReference type="ChEBI" id="CHEBI:30616"/>
        <dbReference type="ChEBI" id="CHEBI:43474"/>
        <dbReference type="ChEBI" id="CHEBI:83898"/>
        <dbReference type="ChEBI" id="CHEBI:83900"/>
        <dbReference type="ChEBI" id="CHEBI:456216"/>
        <dbReference type="EC" id="6.3.2.9"/>
    </reaction>
</comment>
<comment type="pathway">
    <text evidence="1">Cell wall biogenesis; peptidoglycan biosynthesis.</text>
</comment>
<comment type="subcellular location">
    <subcellularLocation>
        <location evidence="1">Cytoplasm</location>
    </subcellularLocation>
</comment>
<comment type="similarity">
    <text evidence="1">Belongs to the MurCDEF family.</text>
</comment>
<keyword id="KW-0067">ATP-binding</keyword>
<keyword id="KW-0131">Cell cycle</keyword>
<keyword id="KW-0132">Cell division</keyword>
<keyword id="KW-0133">Cell shape</keyword>
<keyword id="KW-0961">Cell wall biogenesis/degradation</keyword>
<keyword id="KW-0963">Cytoplasm</keyword>
<keyword id="KW-0436">Ligase</keyword>
<keyword id="KW-0547">Nucleotide-binding</keyword>
<keyword id="KW-0573">Peptidoglycan synthesis</keyword>
<keyword id="KW-1185">Reference proteome</keyword>
<organism>
    <name type="scientific">Nitrosospira multiformis (strain ATCC 25196 / NCIMB 11849 / C 71)</name>
    <dbReference type="NCBI Taxonomy" id="323848"/>
    <lineage>
        <taxon>Bacteria</taxon>
        <taxon>Pseudomonadati</taxon>
        <taxon>Pseudomonadota</taxon>
        <taxon>Betaproteobacteria</taxon>
        <taxon>Nitrosomonadales</taxon>
        <taxon>Nitrosomonadaceae</taxon>
        <taxon>Nitrosospira</taxon>
    </lineage>
</organism>
<protein>
    <recommendedName>
        <fullName evidence="1">UDP-N-acetylmuramoylalanine--D-glutamate ligase</fullName>
        <ecNumber evidence="1">6.3.2.9</ecNumber>
    </recommendedName>
    <alternativeName>
        <fullName evidence="1">D-glutamic acid-adding enzyme</fullName>
    </alternativeName>
    <alternativeName>
        <fullName evidence="1">UDP-N-acetylmuramoyl-L-alanyl-D-glutamate synthetase</fullName>
    </alternativeName>
</protein>
<reference key="1">
    <citation type="submission" date="2005-08" db="EMBL/GenBank/DDBJ databases">
        <title>Complete sequence of chromosome 1 of Nitrosospira multiformis ATCC 25196.</title>
        <authorList>
            <person name="Copeland A."/>
            <person name="Lucas S."/>
            <person name="Lapidus A."/>
            <person name="Barry K."/>
            <person name="Detter J.C."/>
            <person name="Glavina T."/>
            <person name="Hammon N."/>
            <person name="Israni S."/>
            <person name="Pitluck S."/>
            <person name="Chain P."/>
            <person name="Malfatti S."/>
            <person name="Shin M."/>
            <person name="Vergez L."/>
            <person name="Schmutz J."/>
            <person name="Larimer F."/>
            <person name="Land M."/>
            <person name="Hauser L."/>
            <person name="Kyrpides N."/>
            <person name="Lykidis A."/>
            <person name="Richardson P."/>
        </authorList>
    </citation>
    <scope>NUCLEOTIDE SEQUENCE [LARGE SCALE GENOMIC DNA]</scope>
    <source>
        <strain>ATCC 25196 / NCIMB 11849 / C 71</strain>
    </source>
</reference>
<feature type="chain" id="PRO_0000257209" description="UDP-N-acetylmuramoylalanine--D-glutamate ligase">
    <location>
        <begin position="1"/>
        <end position="473"/>
    </location>
</feature>
<feature type="binding site" evidence="1">
    <location>
        <begin position="120"/>
        <end position="126"/>
    </location>
    <ligand>
        <name>ATP</name>
        <dbReference type="ChEBI" id="CHEBI:30616"/>
    </ligand>
</feature>
<dbReference type="EC" id="6.3.2.9" evidence="1"/>
<dbReference type="EMBL" id="CP000103">
    <property type="protein sequence ID" value="ABB75785.1"/>
    <property type="molecule type" value="Genomic_DNA"/>
</dbReference>
<dbReference type="RefSeq" id="WP_011381784.1">
    <property type="nucleotide sequence ID" value="NC_007614.1"/>
</dbReference>
<dbReference type="SMR" id="Q2Y636"/>
<dbReference type="STRING" id="323848.Nmul_A2496"/>
<dbReference type="KEGG" id="nmu:Nmul_A2496"/>
<dbReference type="eggNOG" id="COG0771">
    <property type="taxonomic scope" value="Bacteria"/>
</dbReference>
<dbReference type="HOGENOM" id="CLU_032540_1_0_4"/>
<dbReference type="OrthoDB" id="9809796at2"/>
<dbReference type="UniPathway" id="UPA00219"/>
<dbReference type="Proteomes" id="UP000002718">
    <property type="component" value="Chromosome"/>
</dbReference>
<dbReference type="GO" id="GO:0005737">
    <property type="term" value="C:cytoplasm"/>
    <property type="evidence" value="ECO:0007669"/>
    <property type="project" value="UniProtKB-SubCell"/>
</dbReference>
<dbReference type="GO" id="GO:0005524">
    <property type="term" value="F:ATP binding"/>
    <property type="evidence" value="ECO:0007669"/>
    <property type="project" value="UniProtKB-UniRule"/>
</dbReference>
<dbReference type="GO" id="GO:0008764">
    <property type="term" value="F:UDP-N-acetylmuramoylalanine-D-glutamate ligase activity"/>
    <property type="evidence" value="ECO:0007669"/>
    <property type="project" value="UniProtKB-UniRule"/>
</dbReference>
<dbReference type="GO" id="GO:0051301">
    <property type="term" value="P:cell division"/>
    <property type="evidence" value="ECO:0007669"/>
    <property type="project" value="UniProtKB-KW"/>
</dbReference>
<dbReference type="GO" id="GO:0071555">
    <property type="term" value="P:cell wall organization"/>
    <property type="evidence" value="ECO:0007669"/>
    <property type="project" value="UniProtKB-KW"/>
</dbReference>
<dbReference type="GO" id="GO:0009252">
    <property type="term" value="P:peptidoglycan biosynthetic process"/>
    <property type="evidence" value="ECO:0007669"/>
    <property type="project" value="UniProtKB-UniRule"/>
</dbReference>
<dbReference type="GO" id="GO:0008360">
    <property type="term" value="P:regulation of cell shape"/>
    <property type="evidence" value="ECO:0007669"/>
    <property type="project" value="UniProtKB-KW"/>
</dbReference>
<dbReference type="Gene3D" id="3.90.190.20">
    <property type="entry name" value="Mur ligase, C-terminal domain"/>
    <property type="match status" value="1"/>
</dbReference>
<dbReference type="Gene3D" id="3.40.1190.10">
    <property type="entry name" value="Mur-like, catalytic domain"/>
    <property type="match status" value="1"/>
</dbReference>
<dbReference type="Gene3D" id="3.40.50.720">
    <property type="entry name" value="NAD(P)-binding Rossmann-like Domain"/>
    <property type="match status" value="1"/>
</dbReference>
<dbReference type="HAMAP" id="MF_00639">
    <property type="entry name" value="MurD"/>
    <property type="match status" value="1"/>
</dbReference>
<dbReference type="InterPro" id="IPR036565">
    <property type="entry name" value="Mur-like_cat_sf"/>
</dbReference>
<dbReference type="InterPro" id="IPR004101">
    <property type="entry name" value="Mur_ligase_C"/>
</dbReference>
<dbReference type="InterPro" id="IPR036615">
    <property type="entry name" value="Mur_ligase_C_dom_sf"/>
</dbReference>
<dbReference type="InterPro" id="IPR013221">
    <property type="entry name" value="Mur_ligase_cen"/>
</dbReference>
<dbReference type="InterPro" id="IPR005762">
    <property type="entry name" value="MurD"/>
</dbReference>
<dbReference type="NCBIfam" id="TIGR01087">
    <property type="entry name" value="murD"/>
    <property type="match status" value="1"/>
</dbReference>
<dbReference type="PANTHER" id="PTHR43692">
    <property type="entry name" value="UDP-N-ACETYLMURAMOYLALANINE--D-GLUTAMATE LIGASE"/>
    <property type="match status" value="1"/>
</dbReference>
<dbReference type="PANTHER" id="PTHR43692:SF1">
    <property type="entry name" value="UDP-N-ACETYLMURAMOYLALANINE--D-GLUTAMATE LIGASE"/>
    <property type="match status" value="1"/>
</dbReference>
<dbReference type="Pfam" id="PF02875">
    <property type="entry name" value="Mur_ligase_C"/>
    <property type="match status" value="1"/>
</dbReference>
<dbReference type="Pfam" id="PF08245">
    <property type="entry name" value="Mur_ligase_M"/>
    <property type="match status" value="1"/>
</dbReference>
<dbReference type="Pfam" id="PF21799">
    <property type="entry name" value="MurD-like_N"/>
    <property type="match status" value="1"/>
</dbReference>
<dbReference type="SUPFAM" id="SSF51984">
    <property type="entry name" value="MurCD N-terminal domain"/>
    <property type="match status" value="1"/>
</dbReference>
<dbReference type="SUPFAM" id="SSF53623">
    <property type="entry name" value="MurD-like peptide ligases, catalytic domain"/>
    <property type="match status" value="1"/>
</dbReference>
<dbReference type="SUPFAM" id="SSF53244">
    <property type="entry name" value="MurD-like peptide ligases, peptide-binding domain"/>
    <property type="match status" value="1"/>
</dbReference>
<accession>Q2Y636</accession>
<sequence>MNLQGRTVLVLGLGETGLSMAKWLFRRGALVRAADTRNEPPAMRAFNSLLPQAEVFTGSLAGRAFYGVDLIAISPGLPLSEPLVQQALKEGIPVVGDMELFACAVGGTGGGMPKLVGITGSNGKTTVTAMTGAMLKKAGWDVEVAGNIGPAVLDALMRREDTGKMPQAWVLELSSFQLETTKSLGLDAAAVLNVSEDHLDRYAGMQEYAAAKARIFLGDSEGVQILNGDDPVVRQMTLAGRPHVTFSLATPQSADDFGLLREGGDTWLMQGDTRLMDARELAITGRHNCANALAALALCRALAVPFEPLLQALREFRGLPHRVEKVAAFSGITFYDDSKGTNVGATVAALKGLGQPVVLIAGGDGKAQNFSPLAAPIGEHGRAVVLIGRDAEKIAVAINECGVPLHRAQTMEEAVRKSFQLAREGDAVLMSPACASFDMFDNYVHRAEAFVAAVRSMQAARAGGNSAGVAGRH</sequence>
<name>MURD_NITMU</name>
<proteinExistence type="inferred from homology"/>